<protein>
    <recommendedName>
        <fullName evidence="3">Small ribosomal subunit protein eS21</fullName>
    </recommendedName>
    <alternativeName>
        <fullName>40S ribosomal protein S21</fullName>
    </alternativeName>
</protein>
<gene>
    <name type="primary">rps-21</name>
    <name type="ORF">F37C12.11</name>
</gene>
<reference key="1">
    <citation type="journal article" date="1998" name="Science">
        <title>Genome sequence of the nematode C. elegans: a platform for investigating biology.</title>
        <authorList>
            <consortium name="The C. elegans sequencing consortium"/>
        </authorList>
    </citation>
    <scope>NUCLEOTIDE SEQUENCE [LARGE SCALE GENOMIC DNA]</scope>
    <source>
        <strain>Bristol N2</strain>
    </source>
</reference>
<evidence type="ECO:0000250" key="1">
    <source>
        <dbReference type="UniProtKB" id="P63220"/>
    </source>
</evidence>
<evidence type="ECO:0000250" key="2">
    <source>
        <dbReference type="UniProtKB" id="P63221"/>
    </source>
</evidence>
<evidence type="ECO:0000305" key="3"/>
<organism>
    <name type="scientific">Caenorhabditis elegans</name>
    <dbReference type="NCBI Taxonomy" id="6239"/>
    <lineage>
        <taxon>Eukaryota</taxon>
        <taxon>Metazoa</taxon>
        <taxon>Ecdysozoa</taxon>
        <taxon>Nematoda</taxon>
        <taxon>Chromadorea</taxon>
        <taxon>Rhabditida</taxon>
        <taxon>Rhabditina</taxon>
        <taxon>Rhabditomorpha</taxon>
        <taxon>Rhabditoidea</taxon>
        <taxon>Rhabditidae</taxon>
        <taxon>Peloderinae</taxon>
        <taxon>Caenorhabditis</taxon>
    </lineage>
</organism>
<comment type="subunit">
    <text evidence="1">Component of the 40S small ribosomal subunit.</text>
</comment>
<comment type="interaction">
    <interactant intactId="EBI-313268">
        <id>P49197</id>
    </interactant>
    <interactant intactId="EBI-313262">
        <id>P46769</id>
        <label>rps-0</label>
    </interactant>
    <organismsDiffer>false</organismsDiffer>
    <experiments>4</experiments>
</comment>
<comment type="subcellular location">
    <subcellularLocation>
        <location evidence="1">Cytoplasm</location>
        <location evidence="1">Cytosol</location>
    </subcellularLocation>
    <subcellularLocation>
        <location evidence="1">Cytoplasm</location>
    </subcellularLocation>
    <subcellularLocation>
        <location evidence="2">Rough endoplasmic reticulum</location>
    </subcellularLocation>
    <text evidence="1 2">Detected on cytosolic polysomes (By similarity). Detected in ribosomes that are associated with the rough endoplasmic reticulum (By similarity).</text>
</comment>
<comment type="similarity">
    <text evidence="3">Belongs to the eukaryotic ribosomal protein eS21 family.</text>
</comment>
<accession>P49197</accession>
<proteinExistence type="evidence at protein level"/>
<keyword id="KW-0002">3D-structure</keyword>
<keyword id="KW-0963">Cytoplasm</keyword>
<keyword id="KW-0256">Endoplasmic reticulum</keyword>
<keyword id="KW-1185">Reference proteome</keyword>
<keyword id="KW-0687">Ribonucleoprotein</keyword>
<keyword id="KW-0689">Ribosomal protein</keyword>
<name>RS21_CAEEL</name>
<dbReference type="EMBL" id="FO081316">
    <property type="protein sequence ID" value="CCD70740.1"/>
    <property type="molecule type" value="Genomic_DNA"/>
</dbReference>
<dbReference type="PIR" id="T28840">
    <property type="entry name" value="T28840"/>
</dbReference>
<dbReference type="RefSeq" id="NP_498579.2">
    <property type="nucleotide sequence ID" value="NM_066178.6"/>
</dbReference>
<dbReference type="PDB" id="9BH5">
    <property type="method" value="EM"/>
    <property type="resolution" value="2.63 A"/>
    <property type="chains" value="AV=1-88"/>
</dbReference>
<dbReference type="PDB" id="9CAI">
    <property type="method" value="EM"/>
    <property type="resolution" value="2.59 A"/>
    <property type="chains" value="AV=1-88"/>
</dbReference>
<dbReference type="PDBsum" id="9BH5"/>
<dbReference type="PDBsum" id="9CAI"/>
<dbReference type="EMDB" id="EMD-44533"/>
<dbReference type="EMDB" id="EMD-45392"/>
<dbReference type="SMR" id="P49197"/>
<dbReference type="BioGRID" id="41223">
    <property type="interactions" value="107"/>
</dbReference>
<dbReference type="DIP" id="DIP-25541N"/>
<dbReference type="FunCoup" id="P49197">
    <property type="interactions" value="1768"/>
</dbReference>
<dbReference type="IntAct" id="P49197">
    <property type="interactions" value="1"/>
</dbReference>
<dbReference type="STRING" id="6239.F37C12.11.1"/>
<dbReference type="PaxDb" id="6239-F37C12.11"/>
<dbReference type="PeptideAtlas" id="P49197"/>
<dbReference type="EnsemblMetazoa" id="F37C12.11.1">
    <property type="protein sequence ID" value="F37C12.11.1"/>
    <property type="gene ID" value="WBGene00004490"/>
</dbReference>
<dbReference type="GeneID" id="176011"/>
<dbReference type="KEGG" id="cel:CELE_F37C12.11"/>
<dbReference type="UCSC" id="F37C12.11.1">
    <property type="organism name" value="c. elegans"/>
</dbReference>
<dbReference type="AGR" id="WB:WBGene00004490"/>
<dbReference type="CTD" id="176011"/>
<dbReference type="WormBase" id="F37C12.11">
    <property type="protein sequence ID" value="CE30779"/>
    <property type="gene ID" value="WBGene00004490"/>
    <property type="gene designation" value="rps-21"/>
</dbReference>
<dbReference type="eggNOG" id="KOG3486">
    <property type="taxonomic scope" value="Eukaryota"/>
</dbReference>
<dbReference type="GeneTree" id="ENSGT00390000017515"/>
<dbReference type="HOGENOM" id="CLU_167122_2_0_1"/>
<dbReference type="InParanoid" id="P49197"/>
<dbReference type="OMA" id="GESDACM"/>
<dbReference type="OrthoDB" id="278325at2759"/>
<dbReference type="PhylomeDB" id="P49197"/>
<dbReference type="Reactome" id="R-CEL-156827">
    <property type="pathway name" value="L13a-mediated translational silencing of Ceruloplasmin expression"/>
</dbReference>
<dbReference type="Reactome" id="R-CEL-1799339">
    <property type="pathway name" value="SRP-dependent cotranslational protein targeting to membrane"/>
</dbReference>
<dbReference type="Reactome" id="R-CEL-72649">
    <property type="pathway name" value="Translation initiation complex formation"/>
</dbReference>
<dbReference type="Reactome" id="R-CEL-72689">
    <property type="pathway name" value="Formation of a pool of free 40S subunits"/>
</dbReference>
<dbReference type="Reactome" id="R-CEL-72695">
    <property type="pathway name" value="Formation of the ternary complex, and subsequently, the 43S complex"/>
</dbReference>
<dbReference type="Reactome" id="R-CEL-72702">
    <property type="pathway name" value="Ribosomal scanning and start codon recognition"/>
</dbReference>
<dbReference type="Reactome" id="R-CEL-72706">
    <property type="pathway name" value="GTP hydrolysis and joining of the 60S ribosomal subunit"/>
</dbReference>
<dbReference type="Reactome" id="R-CEL-975956">
    <property type="pathway name" value="Nonsense Mediated Decay (NMD) independent of the Exon Junction Complex (EJC)"/>
</dbReference>
<dbReference type="Reactome" id="R-CEL-975957">
    <property type="pathway name" value="Nonsense Mediated Decay (NMD) enhanced by the Exon Junction Complex (EJC)"/>
</dbReference>
<dbReference type="PRO" id="PR:P49197"/>
<dbReference type="Proteomes" id="UP000001940">
    <property type="component" value="Chromosome III"/>
</dbReference>
<dbReference type="Bgee" id="WBGene00004490">
    <property type="expression patterns" value="Expressed in larva and 4 other cell types or tissues"/>
</dbReference>
<dbReference type="GO" id="GO:0022627">
    <property type="term" value="C:cytosolic small ribosomal subunit"/>
    <property type="evidence" value="ECO:0000318"/>
    <property type="project" value="GO_Central"/>
</dbReference>
<dbReference type="GO" id="GO:0005791">
    <property type="term" value="C:rough endoplasmic reticulum"/>
    <property type="evidence" value="ECO:0007669"/>
    <property type="project" value="UniProtKB-SubCell"/>
</dbReference>
<dbReference type="GO" id="GO:0003735">
    <property type="term" value="F:structural constituent of ribosome"/>
    <property type="evidence" value="ECO:0000318"/>
    <property type="project" value="GO_Central"/>
</dbReference>
<dbReference type="GO" id="GO:0000447">
    <property type="term" value="P:endonucleolytic cleavage in ITS1 to separate SSU-rRNA from 5.8S rRNA and LSU-rRNA from tricistronic rRNA transcript (SSU-rRNA, 5.8S rRNA, LSU-rRNA)"/>
    <property type="evidence" value="ECO:0000318"/>
    <property type="project" value="GO_Central"/>
</dbReference>
<dbReference type="GO" id="GO:0000461">
    <property type="term" value="P:endonucleolytic cleavage to generate mature 3'-end of SSU-rRNA from (SSU-rRNA, 5.8S rRNA, LSU-rRNA)"/>
    <property type="evidence" value="ECO:0000318"/>
    <property type="project" value="GO_Central"/>
</dbReference>
<dbReference type="GO" id="GO:0006412">
    <property type="term" value="P:translation"/>
    <property type="evidence" value="ECO:0007669"/>
    <property type="project" value="InterPro"/>
</dbReference>
<dbReference type="FunFam" id="3.30.1230.20:FF:000005">
    <property type="entry name" value="40S ribosomal protein S21"/>
    <property type="match status" value="1"/>
</dbReference>
<dbReference type="Gene3D" id="3.30.1230.20">
    <property type="match status" value="1"/>
</dbReference>
<dbReference type="InterPro" id="IPR001931">
    <property type="entry name" value="Ribosomal_eS21"/>
</dbReference>
<dbReference type="InterPro" id="IPR018279">
    <property type="entry name" value="Ribosomal_eS21_CS"/>
</dbReference>
<dbReference type="InterPro" id="IPR038579">
    <property type="entry name" value="Ribosomal_eS21_sf"/>
</dbReference>
<dbReference type="PANTHER" id="PTHR10442">
    <property type="entry name" value="40S RIBOSOMAL PROTEIN S21"/>
    <property type="match status" value="1"/>
</dbReference>
<dbReference type="Pfam" id="PF01249">
    <property type="entry name" value="Ribosomal_S21e"/>
    <property type="match status" value="1"/>
</dbReference>
<dbReference type="PIRSF" id="PIRSF002148">
    <property type="entry name" value="Ribosomal_S21e"/>
    <property type="match status" value="1"/>
</dbReference>
<dbReference type="PROSITE" id="PS00996">
    <property type="entry name" value="RIBOSOMAL_S21E"/>
    <property type="match status" value="1"/>
</dbReference>
<feature type="chain" id="PRO_0000194747" description="Small ribosomal subunit protein eS21">
    <location>
        <begin position="1"/>
        <end position="88"/>
    </location>
</feature>
<sequence>MQNDAGQTVELYVPRKCSSSNRIIGPKDHASVQIDFVDVDPETGRMIPGKSTRYAICGAIRRMGESDDAILRLAQKDGLVPRDDVKSN</sequence>